<gene>
    <name evidence="1" type="primary">rpmC</name>
    <name type="ordered locus">GFO_2831</name>
</gene>
<proteinExistence type="inferred from homology"/>
<name>RL29_CHRFK</name>
<evidence type="ECO:0000255" key="1">
    <source>
        <dbReference type="HAMAP-Rule" id="MF_00374"/>
    </source>
</evidence>
<evidence type="ECO:0000305" key="2"/>
<comment type="similarity">
    <text evidence="1">Belongs to the universal ribosomal protein uL29 family.</text>
</comment>
<dbReference type="EMBL" id="CU207366">
    <property type="protein sequence ID" value="CAL67785.1"/>
    <property type="molecule type" value="Genomic_DNA"/>
</dbReference>
<dbReference type="RefSeq" id="WP_011710688.1">
    <property type="nucleotide sequence ID" value="NC_008571.1"/>
</dbReference>
<dbReference type="SMR" id="A0M590"/>
<dbReference type="STRING" id="411154.GFO_2831"/>
<dbReference type="KEGG" id="gfo:GFO_2831"/>
<dbReference type="eggNOG" id="COG0255">
    <property type="taxonomic scope" value="Bacteria"/>
</dbReference>
<dbReference type="HOGENOM" id="CLU_158491_5_1_10"/>
<dbReference type="OrthoDB" id="5296761at2"/>
<dbReference type="Proteomes" id="UP000000755">
    <property type="component" value="Chromosome"/>
</dbReference>
<dbReference type="GO" id="GO:1990904">
    <property type="term" value="C:ribonucleoprotein complex"/>
    <property type="evidence" value="ECO:0007669"/>
    <property type="project" value="UniProtKB-KW"/>
</dbReference>
<dbReference type="GO" id="GO:0005840">
    <property type="term" value="C:ribosome"/>
    <property type="evidence" value="ECO:0007669"/>
    <property type="project" value="UniProtKB-KW"/>
</dbReference>
<dbReference type="GO" id="GO:0003735">
    <property type="term" value="F:structural constituent of ribosome"/>
    <property type="evidence" value="ECO:0007669"/>
    <property type="project" value="InterPro"/>
</dbReference>
<dbReference type="GO" id="GO:0006412">
    <property type="term" value="P:translation"/>
    <property type="evidence" value="ECO:0007669"/>
    <property type="project" value="UniProtKB-UniRule"/>
</dbReference>
<dbReference type="CDD" id="cd00427">
    <property type="entry name" value="Ribosomal_L29_HIP"/>
    <property type="match status" value="1"/>
</dbReference>
<dbReference type="Gene3D" id="1.10.287.310">
    <property type="match status" value="1"/>
</dbReference>
<dbReference type="HAMAP" id="MF_00374">
    <property type="entry name" value="Ribosomal_uL29"/>
    <property type="match status" value="1"/>
</dbReference>
<dbReference type="InterPro" id="IPR001854">
    <property type="entry name" value="Ribosomal_uL29"/>
</dbReference>
<dbReference type="InterPro" id="IPR018254">
    <property type="entry name" value="Ribosomal_uL29_CS"/>
</dbReference>
<dbReference type="InterPro" id="IPR036049">
    <property type="entry name" value="Ribosomal_uL29_sf"/>
</dbReference>
<dbReference type="NCBIfam" id="TIGR00012">
    <property type="entry name" value="L29"/>
    <property type="match status" value="1"/>
</dbReference>
<dbReference type="Pfam" id="PF00831">
    <property type="entry name" value="Ribosomal_L29"/>
    <property type="match status" value="1"/>
</dbReference>
<dbReference type="SUPFAM" id="SSF46561">
    <property type="entry name" value="Ribosomal protein L29 (L29p)"/>
    <property type="match status" value="1"/>
</dbReference>
<dbReference type="PROSITE" id="PS00579">
    <property type="entry name" value="RIBOSOMAL_L29"/>
    <property type="match status" value="1"/>
</dbReference>
<sequence>MKQSEVKELSVAELQEELGKSRKAYSDLKMAHAVSPLENPIQLRTVRRDVARLATELTKREQQ</sequence>
<feature type="chain" id="PRO_1000007490" description="Large ribosomal subunit protein uL29">
    <location>
        <begin position="1"/>
        <end position="63"/>
    </location>
</feature>
<accession>A0M590</accession>
<protein>
    <recommendedName>
        <fullName evidence="1">Large ribosomal subunit protein uL29</fullName>
    </recommendedName>
    <alternativeName>
        <fullName evidence="2">50S ribosomal protein L29</fullName>
    </alternativeName>
</protein>
<organism>
    <name type="scientific">Christiangramia forsetii (strain DSM 17595 / CGMCC 1.15422 / KT0803)</name>
    <name type="common">Gramella forsetii</name>
    <dbReference type="NCBI Taxonomy" id="411154"/>
    <lineage>
        <taxon>Bacteria</taxon>
        <taxon>Pseudomonadati</taxon>
        <taxon>Bacteroidota</taxon>
        <taxon>Flavobacteriia</taxon>
        <taxon>Flavobacteriales</taxon>
        <taxon>Flavobacteriaceae</taxon>
        <taxon>Christiangramia</taxon>
    </lineage>
</organism>
<reference key="1">
    <citation type="journal article" date="2006" name="Environ. Microbiol.">
        <title>Whole genome analysis of the marine Bacteroidetes'Gramella forsetii' reveals adaptations to degradation of polymeric organic matter.</title>
        <authorList>
            <person name="Bauer M."/>
            <person name="Kube M."/>
            <person name="Teeling H."/>
            <person name="Richter M."/>
            <person name="Lombardot T."/>
            <person name="Allers E."/>
            <person name="Wuerdemann C.A."/>
            <person name="Quast C."/>
            <person name="Kuhl H."/>
            <person name="Knaust F."/>
            <person name="Woebken D."/>
            <person name="Bischof K."/>
            <person name="Mussmann M."/>
            <person name="Choudhuri J.V."/>
            <person name="Meyer F."/>
            <person name="Reinhardt R."/>
            <person name="Amann R.I."/>
            <person name="Gloeckner F.O."/>
        </authorList>
    </citation>
    <scope>NUCLEOTIDE SEQUENCE [LARGE SCALE GENOMIC DNA]</scope>
    <source>
        <strain>DSM 17595 / CGMCC 1.15422 / KT0803</strain>
    </source>
</reference>
<keyword id="KW-0687">Ribonucleoprotein</keyword>
<keyword id="KW-0689">Ribosomal protein</keyword>